<sequence length="527" mass="55230">MSSDGERDMARKPIRRALISVYDKTGLIDLAQGLNAAGVDIVSTGSTAKAIADQGIAVTPVEELTGFPEVLDGRVKTLHPRVHAGLLADLRKPEHAAALEQLGIEAFELVVVNLYPFSQTVKSGATVDECVEQIDIGGSSMVRAAAKNHPSVAVVTDPLGYVGVLAAVQGGGFTLAERKMLASMAFQHIAEYEIAVASWMQSTLAPEQPPTAFPQWFGRSWRRSAILRYGENPHQQAALYSDPSACPGLAQAEQLHGKNMSYNNFTDADAAWRAAFDHEQSCVAIIKHANPCGIAISSLSVADAHRKAHECDPLSAYGGVIAANTEVSLEMAEYVSTIFTEVIVAPSYAPGAVDVLSCKKNVRVLVASAPLRGGSELRPVSGGLLIQQPDQLDTAGDNPANWTLATGSPAGPATLTDLVFAWRACRAVKSNAIVIAADGATIGVGMGQVNRVDAARLAVERGGDRVRGAVVASDAFFPFADGLQTLAAAGVTAIVHPGGSVRDAEVTAAATKAGVTLYLTGVRHFVH</sequence>
<proteinExistence type="inferred from homology"/>
<comment type="catalytic activity">
    <reaction evidence="1">
        <text>(6R)-10-formyltetrahydrofolate + 5-amino-1-(5-phospho-beta-D-ribosyl)imidazole-4-carboxamide = 5-formamido-1-(5-phospho-D-ribosyl)imidazole-4-carboxamide + (6S)-5,6,7,8-tetrahydrofolate</text>
        <dbReference type="Rhea" id="RHEA:22192"/>
        <dbReference type="ChEBI" id="CHEBI:57453"/>
        <dbReference type="ChEBI" id="CHEBI:58467"/>
        <dbReference type="ChEBI" id="CHEBI:58475"/>
        <dbReference type="ChEBI" id="CHEBI:195366"/>
        <dbReference type="EC" id="2.1.2.3"/>
    </reaction>
</comment>
<comment type="catalytic activity">
    <reaction evidence="1">
        <text>IMP + H2O = 5-formamido-1-(5-phospho-D-ribosyl)imidazole-4-carboxamide</text>
        <dbReference type="Rhea" id="RHEA:18445"/>
        <dbReference type="ChEBI" id="CHEBI:15377"/>
        <dbReference type="ChEBI" id="CHEBI:58053"/>
        <dbReference type="ChEBI" id="CHEBI:58467"/>
        <dbReference type="EC" id="3.5.4.10"/>
    </reaction>
</comment>
<comment type="pathway">
    <text evidence="1">Purine metabolism; IMP biosynthesis via de novo pathway; 5-formamido-1-(5-phospho-D-ribosyl)imidazole-4-carboxamide from 5-amino-1-(5-phospho-D-ribosyl)imidazole-4-carboxamide (10-formyl THF route): step 1/1.</text>
</comment>
<comment type="pathway">
    <text evidence="1">Purine metabolism; IMP biosynthesis via de novo pathway; IMP from 5-formamido-1-(5-phospho-D-ribosyl)imidazole-4-carboxamide: step 1/1.</text>
</comment>
<comment type="domain">
    <text evidence="1">The IMP cyclohydrolase activity resides in the N-terminal region.</text>
</comment>
<comment type="similarity">
    <text evidence="1">Belongs to the PurH family.</text>
</comment>
<feature type="chain" id="PRO_1000122966" description="Bifunctional purine biosynthesis protein PurH">
    <location>
        <begin position="1"/>
        <end position="527"/>
    </location>
</feature>
<feature type="domain" description="MGS-like" evidence="2">
    <location>
        <begin position="9"/>
        <end position="156"/>
    </location>
</feature>
<reference key="1">
    <citation type="journal article" date="2009" name="Nat. Genet.">
        <title>Comparative genomic and phylogeographic analysis of Mycobacterium leprae.</title>
        <authorList>
            <person name="Monot M."/>
            <person name="Honore N."/>
            <person name="Garnier T."/>
            <person name="Zidane N."/>
            <person name="Sherafi D."/>
            <person name="Paniz-Mondolfi A."/>
            <person name="Matsuoka M."/>
            <person name="Taylor G.M."/>
            <person name="Donoghue H.D."/>
            <person name="Bouwman A."/>
            <person name="Mays S."/>
            <person name="Watson C."/>
            <person name="Lockwood D."/>
            <person name="Khamispour A."/>
            <person name="Dowlati Y."/>
            <person name="Jianping S."/>
            <person name="Rea T.H."/>
            <person name="Vera-Cabrera L."/>
            <person name="Stefani M.M."/>
            <person name="Banu S."/>
            <person name="Macdonald M."/>
            <person name="Sapkota B.R."/>
            <person name="Spencer J.S."/>
            <person name="Thomas J."/>
            <person name="Harshman K."/>
            <person name="Singh P."/>
            <person name="Busso P."/>
            <person name="Gattiker A."/>
            <person name="Rougemont J."/>
            <person name="Brennan P.J."/>
            <person name="Cole S.T."/>
        </authorList>
    </citation>
    <scope>NUCLEOTIDE SEQUENCE [LARGE SCALE GENOMIC DNA]</scope>
    <source>
        <strain>Br4923</strain>
    </source>
</reference>
<keyword id="KW-0378">Hydrolase</keyword>
<keyword id="KW-0511">Multifunctional enzyme</keyword>
<keyword id="KW-0658">Purine biosynthesis</keyword>
<keyword id="KW-0808">Transferase</keyword>
<protein>
    <recommendedName>
        <fullName evidence="1">Bifunctional purine biosynthesis protein PurH</fullName>
    </recommendedName>
    <domain>
        <recommendedName>
            <fullName evidence="1">Phosphoribosylaminoimidazolecarboxamide formyltransferase</fullName>
            <ecNumber evidence="1">2.1.2.3</ecNumber>
        </recommendedName>
        <alternativeName>
            <fullName evidence="1">AICAR transformylase</fullName>
        </alternativeName>
    </domain>
    <domain>
        <recommendedName>
            <fullName evidence="1">IMP cyclohydrolase</fullName>
            <ecNumber evidence="1">3.5.4.10</ecNumber>
        </recommendedName>
        <alternativeName>
            <fullName evidence="1">ATIC</fullName>
        </alternativeName>
        <alternativeName>
            <fullName evidence="1">IMP synthase</fullName>
        </alternativeName>
        <alternativeName>
            <fullName evidence="1">Inosinicase</fullName>
        </alternativeName>
    </domain>
</protein>
<name>PUR9_MYCLB</name>
<organism>
    <name type="scientific">Mycobacterium leprae (strain Br4923)</name>
    <dbReference type="NCBI Taxonomy" id="561304"/>
    <lineage>
        <taxon>Bacteria</taxon>
        <taxon>Bacillati</taxon>
        <taxon>Actinomycetota</taxon>
        <taxon>Actinomycetes</taxon>
        <taxon>Mycobacteriales</taxon>
        <taxon>Mycobacteriaceae</taxon>
        <taxon>Mycobacterium</taxon>
    </lineage>
</organism>
<evidence type="ECO:0000255" key="1">
    <source>
        <dbReference type="HAMAP-Rule" id="MF_00139"/>
    </source>
</evidence>
<evidence type="ECO:0000255" key="2">
    <source>
        <dbReference type="PROSITE-ProRule" id="PRU01202"/>
    </source>
</evidence>
<dbReference type="EC" id="2.1.2.3" evidence="1"/>
<dbReference type="EC" id="3.5.4.10" evidence="1"/>
<dbReference type="EMBL" id="FM211192">
    <property type="protein sequence ID" value="CAR70254.1"/>
    <property type="molecule type" value="Genomic_DNA"/>
</dbReference>
<dbReference type="SMR" id="B8ZU05"/>
<dbReference type="KEGG" id="mlb:MLBr00161"/>
<dbReference type="HOGENOM" id="CLU_016316_5_2_11"/>
<dbReference type="UniPathway" id="UPA00074">
    <property type="reaction ID" value="UER00133"/>
</dbReference>
<dbReference type="UniPathway" id="UPA00074">
    <property type="reaction ID" value="UER00135"/>
</dbReference>
<dbReference type="Proteomes" id="UP000006900">
    <property type="component" value="Chromosome"/>
</dbReference>
<dbReference type="GO" id="GO:0005829">
    <property type="term" value="C:cytosol"/>
    <property type="evidence" value="ECO:0007669"/>
    <property type="project" value="TreeGrafter"/>
</dbReference>
<dbReference type="GO" id="GO:0003937">
    <property type="term" value="F:IMP cyclohydrolase activity"/>
    <property type="evidence" value="ECO:0007669"/>
    <property type="project" value="UniProtKB-UniRule"/>
</dbReference>
<dbReference type="GO" id="GO:0004643">
    <property type="term" value="F:phosphoribosylaminoimidazolecarboxamide formyltransferase activity"/>
    <property type="evidence" value="ECO:0007669"/>
    <property type="project" value="UniProtKB-UniRule"/>
</dbReference>
<dbReference type="GO" id="GO:0006189">
    <property type="term" value="P:'de novo' IMP biosynthetic process"/>
    <property type="evidence" value="ECO:0007669"/>
    <property type="project" value="UniProtKB-UniRule"/>
</dbReference>
<dbReference type="CDD" id="cd01421">
    <property type="entry name" value="IMPCH"/>
    <property type="match status" value="1"/>
</dbReference>
<dbReference type="FunFam" id="3.40.140.20:FF:000001">
    <property type="entry name" value="Bifunctional purine biosynthesis protein PurH"/>
    <property type="match status" value="1"/>
</dbReference>
<dbReference type="FunFam" id="3.40.50.1380:FF:000001">
    <property type="entry name" value="Bifunctional purine biosynthesis protein PurH"/>
    <property type="match status" value="1"/>
</dbReference>
<dbReference type="Gene3D" id="3.40.140.20">
    <property type="match status" value="2"/>
</dbReference>
<dbReference type="Gene3D" id="3.40.50.1380">
    <property type="entry name" value="Methylglyoxal synthase-like domain"/>
    <property type="match status" value="1"/>
</dbReference>
<dbReference type="HAMAP" id="MF_00139">
    <property type="entry name" value="PurH"/>
    <property type="match status" value="1"/>
</dbReference>
<dbReference type="InterPro" id="IPR024051">
    <property type="entry name" value="AICAR_Tfase_dup_dom_sf"/>
</dbReference>
<dbReference type="InterPro" id="IPR016193">
    <property type="entry name" value="Cytidine_deaminase-like"/>
</dbReference>
<dbReference type="InterPro" id="IPR011607">
    <property type="entry name" value="MGS-like_dom"/>
</dbReference>
<dbReference type="InterPro" id="IPR036914">
    <property type="entry name" value="MGS-like_dom_sf"/>
</dbReference>
<dbReference type="InterPro" id="IPR002695">
    <property type="entry name" value="PurH-like"/>
</dbReference>
<dbReference type="NCBIfam" id="NF002049">
    <property type="entry name" value="PRK00881.1"/>
    <property type="match status" value="1"/>
</dbReference>
<dbReference type="NCBIfam" id="TIGR00355">
    <property type="entry name" value="purH"/>
    <property type="match status" value="1"/>
</dbReference>
<dbReference type="PANTHER" id="PTHR11692:SF0">
    <property type="entry name" value="BIFUNCTIONAL PURINE BIOSYNTHESIS PROTEIN ATIC"/>
    <property type="match status" value="1"/>
</dbReference>
<dbReference type="PANTHER" id="PTHR11692">
    <property type="entry name" value="BIFUNCTIONAL PURINE BIOSYNTHESIS PROTEIN PURH"/>
    <property type="match status" value="1"/>
</dbReference>
<dbReference type="Pfam" id="PF01808">
    <property type="entry name" value="AICARFT_IMPCHas"/>
    <property type="match status" value="1"/>
</dbReference>
<dbReference type="Pfam" id="PF02142">
    <property type="entry name" value="MGS"/>
    <property type="match status" value="1"/>
</dbReference>
<dbReference type="PIRSF" id="PIRSF000414">
    <property type="entry name" value="AICARFT_IMPCHas"/>
    <property type="match status" value="1"/>
</dbReference>
<dbReference type="SMART" id="SM00798">
    <property type="entry name" value="AICARFT_IMPCHas"/>
    <property type="match status" value="1"/>
</dbReference>
<dbReference type="SMART" id="SM00851">
    <property type="entry name" value="MGS"/>
    <property type="match status" value="1"/>
</dbReference>
<dbReference type="SUPFAM" id="SSF53927">
    <property type="entry name" value="Cytidine deaminase-like"/>
    <property type="match status" value="1"/>
</dbReference>
<dbReference type="SUPFAM" id="SSF52335">
    <property type="entry name" value="Methylglyoxal synthase-like"/>
    <property type="match status" value="1"/>
</dbReference>
<dbReference type="PROSITE" id="PS51855">
    <property type="entry name" value="MGS"/>
    <property type="match status" value="1"/>
</dbReference>
<gene>
    <name evidence="1" type="primary">purH</name>
    <name type="ordered locus">MLBr00161</name>
</gene>
<accession>B8ZU05</accession>